<accession>Q4DBX5</accession>
<sequence>MAEGSALLRGSSNHKVTLVTGNDGKRREVQACLEGHVLVENVNLDLPEMQSDSVFEISRNKALMAYDITKSPVLVEDTALCFDALGGLPGPYVKWFFERIGPTGLIKLLEGFDTRRAYATCVFTYCASPDVVLQFEGRCDGRIVEAPRGEGGFGWDSVFEPDEGCGQTFAEMQDEEKNRISPRAKALVALKAHFCL</sequence>
<name>ITPA1_TRYCC</name>
<gene>
    <name type="ORF">Tc00.1047053504103.6</name>
</gene>
<proteinExistence type="inferred from homology"/>
<organism>
    <name type="scientific">Trypanosoma cruzi (strain CL Brener)</name>
    <dbReference type="NCBI Taxonomy" id="353153"/>
    <lineage>
        <taxon>Eukaryota</taxon>
        <taxon>Discoba</taxon>
        <taxon>Euglenozoa</taxon>
        <taxon>Kinetoplastea</taxon>
        <taxon>Metakinetoplastina</taxon>
        <taxon>Trypanosomatida</taxon>
        <taxon>Trypanosomatidae</taxon>
        <taxon>Trypanosoma</taxon>
        <taxon>Schizotrypanum</taxon>
    </lineage>
</organism>
<evidence type="ECO:0000255" key="1">
    <source>
        <dbReference type="HAMAP-Rule" id="MF_03148"/>
    </source>
</evidence>
<feature type="chain" id="PRO_0000413123" description="Inosine triphosphate pyrophosphatase 1">
    <location>
        <begin position="1"/>
        <end position="196"/>
    </location>
</feature>
<feature type="binding site" evidence="1">
    <location>
        <begin position="20"/>
        <end position="25"/>
    </location>
    <ligand>
        <name>ITP</name>
        <dbReference type="ChEBI" id="CHEBI:61402"/>
    </ligand>
</feature>
<feature type="binding site" evidence="1">
    <location>
        <position position="48"/>
    </location>
    <ligand>
        <name>Mg(2+)</name>
        <dbReference type="ChEBI" id="CHEBI:18420"/>
    </ligand>
</feature>
<feature type="binding site" evidence="1">
    <location>
        <position position="61"/>
    </location>
    <ligand>
        <name>ITP</name>
        <dbReference type="ChEBI" id="CHEBI:61402"/>
    </ligand>
</feature>
<feature type="binding site" evidence="1">
    <location>
        <begin position="77"/>
        <end position="78"/>
    </location>
    <ligand>
        <name>ITP</name>
        <dbReference type="ChEBI" id="CHEBI:61402"/>
    </ligand>
</feature>
<feature type="binding site" evidence="1">
    <location>
        <position position="94"/>
    </location>
    <ligand>
        <name>ITP</name>
        <dbReference type="ChEBI" id="CHEBI:61402"/>
    </ligand>
</feature>
<feature type="binding site" evidence="1">
    <location>
        <begin position="153"/>
        <end position="156"/>
    </location>
    <ligand>
        <name>ITP</name>
        <dbReference type="ChEBI" id="CHEBI:61402"/>
    </ligand>
</feature>
<feature type="binding site" evidence="1">
    <location>
        <position position="177"/>
    </location>
    <ligand>
        <name>ITP</name>
        <dbReference type="ChEBI" id="CHEBI:61402"/>
    </ligand>
</feature>
<feature type="binding site" evidence="1">
    <location>
        <begin position="182"/>
        <end position="183"/>
    </location>
    <ligand>
        <name>ITP</name>
        <dbReference type="ChEBI" id="CHEBI:61402"/>
    </ligand>
</feature>
<protein>
    <recommendedName>
        <fullName evidence="1">Inosine triphosphate pyrophosphatase 1</fullName>
        <shortName evidence="1">ITPase 1</shortName>
        <shortName evidence="1">Inosine triphosphatase 1</shortName>
        <ecNumber evidence="1">3.6.1.66</ecNumber>
    </recommendedName>
    <alternativeName>
        <fullName evidence="1">Non-canonical purine NTP pyrophosphatase 1</fullName>
    </alternativeName>
    <alternativeName>
        <fullName evidence="1">Non-standard purine NTP pyrophosphatase 1</fullName>
    </alternativeName>
    <alternativeName>
        <fullName evidence="1">Nucleoside-triphosphate diphosphatase 1</fullName>
    </alternativeName>
    <alternativeName>
        <fullName evidence="1">Nucleoside-triphosphate pyrophosphatase 1</fullName>
        <shortName evidence="1">NTPase 1</shortName>
    </alternativeName>
    <alternativeName>
        <fullName evidence="1">XTP/dITP diphosphatase 1</fullName>
    </alternativeName>
</protein>
<comment type="function">
    <text evidence="1">Pyrophosphatase that hydrolyzes non-canonical purine nucleotides such as inosine triphosphate (ITP), deoxyinosine triphosphate (dITP) or xanthosine 5'-triphosphate (XTP) to their respective monophosphate derivatives. The enzyme does not distinguish between the deoxy- and ribose forms. Probably excludes non-canonical purines from RNA and DNA precursor pools, thus preventing their incorporation into RNA and DNA and avoiding chromosomal lesions.</text>
</comment>
<comment type="catalytic activity">
    <reaction evidence="1">
        <text>ITP + H2O = IMP + diphosphate + H(+)</text>
        <dbReference type="Rhea" id="RHEA:29399"/>
        <dbReference type="ChEBI" id="CHEBI:15377"/>
        <dbReference type="ChEBI" id="CHEBI:15378"/>
        <dbReference type="ChEBI" id="CHEBI:33019"/>
        <dbReference type="ChEBI" id="CHEBI:58053"/>
        <dbReference type="ChEBI" id="CHEBI:61402"/>
        <dbReference type="EC" id="3.6.1.66"/>
    </reaction>
    <physiologicalReaction direction="left-to-right" evidence="1">
        <dbReference type="Rhea" id="RHEA:29400"/>
    </physiologicalReaction>
</comment>
<comment type="catalytic activity">
    <reaction evidence="1">
        <text>dITP + H2O = dIMP + diphosphate + H(+)</text>
        <dbReference type="Rhea" id="RHEA:28342"/>
        <dbReference type="ChEBI" id="CHEBI:15377"/>
        <dbReference type="ChEBI" id="CHEBI:15378"/>
        <dbReference type="ChEBI" id="CHEBI:33019"/>
        <dbReference type="ChEBI" id="CHEBI:61194"/>
        <dbReference type="ChEBI" id="CHEBI:61382"/>
        <dbReference type="EC" id="3.6.1.66"/>
    </reaction>
    <physiologicalReaction direction="left-to-right" evidence="1">
        <dbReference type="Rhea" id="RHEA:28343"/>
    </physiologicalReaction>
</comment>
<comment type="catalytic activity">
    <reaction evidence="1">
        <text>XTP + H2O = XMP + diphosphate + H(+)</text>
        <dbReference type="Rhea" id="RHEA:28610"/>
        <dbReference type="ChEBI" id="CHEBI:15377"/>
        <dbReference type="ChEBI" id="CHEBI:15378"/>
        <dbReference type="ChEBI" id="CHEBI:33019"/>
        <dbReference type="ChEBI" id="CHEBI:57464"/>
        <dbReference type="ChEBI" id="CHEBI:61314"/>
        <dbReference type="EC" id="3.6.1.66"/>
    </reaction>
    <physiologicalReaction direction="left-to-right" evidence="1">
        <dbReference type="Rhea" id="RHEA:28611"/>
    </physiologicalReaction>
</comment>
<comment type="cofactor">
    <cofactor evidence="1">
        <name>Mg(2+)</name>
        <dbReference type="ChEBI" id="CHEBI:18420"/>
    </cofactor>
    <cofactor evidence="1">
        <name>Mn(2+)</name>
        <dbReference type="ChEBI" id="CHEBI:29035"/>
    </cofactor>
    <text evidence="1">Binds 1 divalent metal cation per subunit; can use either Mg(2+) or Mn(2+).</text>
</comment>
<comment type="subunit">
    <text evidence="1">Homodimer.</text>
</comment>
<comment type="subcellular location">
    <subcellularLocation>
        <location evidence="1">Cytoplasm</location>
    </subcellularLocation>
</comment>
<comment type="similarity">
    <text evidence="1">Belongs to the HAM1 NTPase family.</text>
</comment>
<dbReference type="EC" id="3.6.1.66" evidence="1"/>
<dbReference type="EMBL" id="AAHK01000682">
    <property type="protein sequence ID" value="EAN90026.1"/>
    <property type="molecule type" value="Genomic_DNA"/>
</dbReference>
<dbReference type="RefSeq" id="XP_811877.1">
    <property type="nucleotide sequence ID" value="XM_806784.1"/>
</dbReference>
<dbReference type="SMR" id="Q4DBX5"/>
<dbReference type="FunCoup" id="Q4DBX5">
    <property type="interactions" value="603"/>
</dbReference>
<dbReference type="STRING" id="353153.Q4DBX5"/>
<dbReference type="PaxDb" id="353153-Q4DBX5"/>
<dbReference type="EnsemblProtists" id="EAN90026">
    <property type="protein sequence ID" value="EAN90026"/>
    <property type="gene ID" value="Tc00.1047053504103.6"/>
</dbReference>
<dbReference type="GeneID" id="3542909"/>
<dbReference type="KEGG" id="tcr:504103.6"/>
<dbReference type="eggNOG" id="KOG3222">
    <property type="taxonomic scope" value="Eukaryota"/>
</dbReference>
<dbReference type="InParanoid" id="Q4DBX5"/>
<dbReference type="OMA" id="QWDCVFI"/>
<dbReference type="Proteomes" id="UP000002296">
    <property type="component" value="Unassembled WGS sequence"/>
</dbReference>
<dbReference type="GO" id="GO:0005737">
    <property type="term" value="C:cytoplasm"/>
    <property type="evidence" value="ECO:0007669"/>
    <property type="project" value="UniProtKB-SubCell"/>
</dbReference>
<dbReference type="GO" id="GO:0035870">
    <property type="term" value="F:dITP diphosphatase activity"/>
    <property type="evidence" value="ECO:0007669"/>
    <property type="project" value="RHEA"/>
</dbReference>
<dbReference type="GO" id="GO:0036220">
    <property type="term" value="F:ITP diphosphatase activity"/>
    <property type="evidence" value="ECO:0007669"/>
    <property type="project" value="RHEA"/>
</dbReference>
<dbReference type="GO" id="GO:0046872">
    <property type="term" value="F:metal ion binding"/>
    <property type="evidence" value="ECO:0007669"/>
    <property type="project" value="UniProtKB-KW"/>
</dbReference>
<dbReference type="GO" id="GO:0000166">
    <property type="term" value="F:nucleotide binding"/>
    <property type="evidence" value="ECO:0007669"/>
    <property type="project" value="UniProtKB-KW"/>
</dbReference>
<dbReference type="GO" id="GO:0036222">
    <property type="term" value="F:XTP diphosphatase activity"/>
    <property type="evidence" value="ECO:0007669"/>
    <property type="project" value="RHEA"/>
</dbReference>
<dbReference type="GO" id="GO:0009204">
    <property type="term" value="P:deoxyribonucleoside triphosphate catabolic process"/>
    <property type="evidence" value="ECO:0007669"/>
    <property type="project" value="UniProtKB-UniRule"/>
</dbReference>
<dbReference type="GO" id="GO:0009117">
    <property type="term" value="P:nucleotide metabolic process"/>
    <property type="evidence" value="ECO:0007669"/>
    <property type="project" value="UniProtKB-KW"/>
</dbReference>
<dbReference type="CDD" id="cd00515">
    <property type="entry name" value="HAM1"/>
    <property type="match status" value="1"/>
</dbReference>
<dbReference type="FunFam" id="3.90.950.10:FF:000003">
    <property type="entry name" value="Inosine triphosphate pyrophosphatase"/>
    <property type="match status" value="1"/>
</dbReference>
<dbReference type="Gene3D" id="3.90.950.10">
    <property type="match status" value="1"/>
</dbReference>
<dbReference type="HAMAP" id="MF_03148">
    <property type="entry name" value="HAM1_NTPase"/>
    <property type="match status" value="1"/>
</dbReference>
<dbReference type="InterPro" id="IPR027502">
    <property type="entry name" value="ITPase"/>
</dbReference>
<dbReference type="InterPro" id="IPR029001">
    <property type="entry name" value="ITPase-like_fam"/>
</dbReference>
<dbReference type="InterPro" id="IPR002637">
    <property type="entry name" value="RdgB/HAM1"/>
</dbReference>
<dbReference type="NCBIfam" id="TIGR00042">
    <property type="entry name" value="RdgB/HAM1 family non-canonical purine NTP pyrophosphatase"/>
    <property type="match status" value="1"/>
</dbReference>
<dbReference type="PANTHER" id="PTHR11067:SF9">
    <property type="entry name" value="INOSINE TRIPHOSPHATE PYROPHOSPHATASE"/>
    <property type="match status" value="1"/>
</dbReference>
<dbReference type="PANTHER" id="PTHR11067">
    <property type="entry name" value="INOSINE TRIPHOSPHATE PYROPHOSPHATASE/HAM1 PROTEIN"/>
    <property type="match status" value="1"/>
</dbReference>
<dbReference type="Pfam" id="PF01725">
    <property type="entry name" value="Ham1p_like"/>
    <property type="match status" value="1"/>
</dbReference>
<dbReference type="SUPFAM" id="SSF52972">
    <property type="entry name" value="ITPase-like"/>
    <property type="match status" value="1"/>
</dbReference>
<keyword id="KW-0963">Cytoplasm</keyword>
<keyword id="KW-0378">Hydrolase</keyword>
<keyword id="KW-0460">Magnesium</keyword>
<keyword id="KW-0464">Manganese</keyword>
<keyword id="KW-0479">Metal-binding</keyword>
<keyword id="KW-0546">Nucleotide metabolism</keyword>
<keyword id="KW-0547">Nucleotide-binding</keyword>
<keyword id="KW-1185">Reference proteome</keyword>
<reference key="1">
    <citation type="journal article" date="2005" name="Science">
        <title>The genome sequence of Trypanosoma cruzi, etiologic agent of Chagas disease.</title>
        <authorList>
            <person name="El-Sayed N.M.A."/>
            <person name="Myler P.J."/>
            <person name="Bartholomeu D.C."/>
            <person name="Nilsson D."/>
            <person name="Aggarwal G."/>
            <person name="Tran A.-N."/>
            <person name="Ghedin E."/>
            <person name="Worthey E.A."/>
            <person name="Delcher A.L."/>
            <person name="Blandin G."/>
            <person name="Westenberger S.J."/>
            <person name="Caler E."/>
            <person name="Cerqueira G.C."/>
            <person name="Branche C."/>
            <person name="Haas B."/>
            <person name="Anupama A."/>
            <person name="Arner E."/>
            <person name="Aslund L."/>
            <person name="Attipoe P."/>
            <person name="Bontempi E."/>
            <person name="Bringaud F."/>
            <person name="Burton P."/>
            <person name="Cadag E."/>
            <person name="Campbell D.A."/>
            <person name="Carrington M."/>
            <person name="Crabtree J."/>
            <person name="Darban H."/>
            <person name="da Silveira J.F."/>
            <person name="de Jong P."/>
            <person name="Edwards K."/>
            <person name="Englund P.T."/>
            <person name="Fazelina G."/>
            <person name="Feldblyum T."/>
            <person name="Ferella M."/>
            <person name="Frasch A.C."/>
            <person name="Gull K."/>
            <person name="Horn D."/>
            <person name="Hou L."/>
            <person name="Huang Y."/>
            <person name="Kindlund E."/>
            <person name="Klingbeil M."/>
            <person name="Kluge S."/>
            <person name="Koo H."/>
            <person name="Lacerda D."/>
            <person name="Levin M.J."/>
            <person name="Lorenzi H."/>
            <person name="Louie T."/>
            <person name="Machado C.R."/>
            <person name="McCulloch R."/>
            <person name="McKenna A."/>
            <person name="Mizuno Y."/>
            <person name="Mottram J.C."/>
            <person name="Nelson S."/>
            <person name="Ochaya S."/>
            <person name="Osoegawa K."/>
            <person name="Pai G."/>
            <person name="Parsons M."/>
            <person name="Pentony M."/>
            <person name="Pettersson U."/>
            <person name="Pop M."/>
            <person name="Ramirez J.L."/>
            <person name="Rinta J."/>
            <person name="Robertson L."/>
            <person name="Salzberg S.L."/>
            <person name="Sanchez D.O."/>
            <person name="Seyler A."/>
            <person name="Sharma R."/>
            <person name="Shetty J."/>
            <person name="Simpson A.J."/>
            <person name="Sisk E."/>
            <person name="Tammi M.T."/>
            <person name="Tarleton R."/>
            <person name="Teixeira S."/>
            <person name="Van Aken S."/>
            <person name="Vogt C."/>
            <person name="Ward P.N."/>
            <person name="Wickstead B."/>
            <person name="Wortman J."/>
            <person name="White O."/>
            <person name="Fraser C.M."/>
            <person name="Stuart K.D."/>
            <person name="Andersson B."/>
        </authorList>
    </citation>
    <scope>NUCLEOTIDE SEQUENCE [LARGE SCALE GENOMIC DNA]</scope>
    <source>
        <strain>CL Brener</strain>
    </source>
</reference>